<sequence length="6" mass="787">GNFFRF</sequence>
<evidence type="ECO:0000269" key="1">
    <source>
    </source>
</evidence>
<evidence type="ECO:0000305" key="2"/>
<feature type="peptide" id="PRO_0000043693" description="FMRFamide-like neuropeptide GNFFRF-amide">
    <location>
        <begin position="1"/>
        <end position="6"/>
    </location>
</feature>
<feature type="modified residue" description="Phenylalanine amide" evidence="1">
    <location>
        <position position="6"/>
    </location>
</feature>
<dbReference type="PIR" id="A43129">
    <property type="entry name" value="A43129"/>
</dbReference>
<dbReference type="GO" id="GO:0005576">
    <property type="term" value="C:extracellular region"/>
    <property type="evidence" value="ECO:0007669"/>
    <property type="project" value="UniProtKB-SubCell"/>
</dbReference>
<dbReference type="GO" id="GO:0007218">
    <property type="term" value="P:neuropeptide signaling pathway"/>
    <property type="evidence" value="ECO:0007669"/>
    <property type="project" value="UniProtKB-KW"/>
</dbReference>
<organism>
    <name type="scientific">Moniezia expansa</name>
    <name type="common">Sheep tapeworm</name>
    <dbReference type="NCBI Taxonomy" id="28841"/>
    <lineage>
        <taxon>Eukaryota</taxon>
        <taxon>Metazoa</taxon>
        <taxon>Spiralia</taxon>
        <taxon>Lophotrochozoa</taxon>
        <taxon>Platyhelminthes</taxon>
        <taxon>Cestoda</taxon>
        <taxon>Eucestoda</taxon>
        <taxon>Cyclophyllidea</taxon>
        <taxon>Anoplocephalidae</taxon>
        <taxon>Moniezia</taxon>
    </lineage>
</organism>
<accession>P41966</accession>
<comment type="subcellular location">
    <subcellularLocation>
        <location>Secreted</location>
    </subcellularLocation>
</comment>
<comment type="similarity">
    <text evidence="2">Belongs to the FARP (FMRFamide related peptide) family.</text>
</comment>
<protein>
    <recommendedName>
        <fullName>FMRFamide-like neuropeptide GNFFRF-amide</fullName>
    </recommendedName>
</protein>
<reference key="1">
    <citation type="journal article" date="1993" name="Biochem. Biophys. Res. Commun.">
        <title>GNFFRFamide: a novel FMRFamide-immunoreactive peptide isolated from the sheep tapeworm, Moniezia expansa.</title>
        <authorList>
            <person name="Maule A.G."/>
            <person name="Shaw C."/>
            <person name="Halton D.W."/>
            <person name="Thim L."/>
        </authorList>
    </citation>
    <scope>PROTEIN SEQUENCE</scope>
    <scope>AMIDATION AT PHE-6</scope>
</reference>
<proteinExistence type="evidence at protein level"/>
<name>FARP_MONEX</name>
<keyword id="KW-0027">Amidation</keyword>
<keyword id="KW-0903">Direct protein sequencing</keyword>
<keyword id="KW-0527">Neuropeptide</keyword>
<keyword id="KW-0964">Secreted</keyword>